<keyword id="KW-0472">Membrane</keyword>
<keyword id="KW-0496">Mitochondrion</keyword>
<keyword id="KW-0999">Mitochondrion inner membrane</keyword>
<keyword id="KW-0521">NADP</keyword>
<keyword id="KW-0554">One-carbon metabolism</keyword>
<keyword id="KW-0560">Oxidoreductase</keyword>
<keyword id="KW-1267">Proteomics identification</keyword>
<keyword id="KW-1185">Reference proteome</keyword>
<organism>
    <name type="scientific">Homo sapiens</name>
    <name type="common">Human</name>
    <dbReference type="NCBI Taxonomy" id="9606"/>
    <lineage>
        <taxon>Eukaryota</taxon>
        <taxon>Metazoa</taxon>
        <taxon>Chordata</taxon>
        <taxon>Craniata</taxon>
        <taxon>Vertebrata</taxon>
        <taxon>Euteleostomi</taxon>
        <taxon>Mammalia</taxon>
        <taxon>Eutheria</taxon>
        <taxon>Euarchontoglires</taxon>
        <taxon>Primates</taxon>
        <taxon>Haplorrhini</taxon>
        <taxon>Catarrhini</taxon>
        <taxon>Hominidae</taxon>
        <taxon>Homo</taxon>
    </lineage>
</organism>
<sequence length="187" mass="21620">MFLLLNCIVAVSQNMGIGKNGDLPRPPLRNEFRYFQRMTTTSSVEGKQNLVIMGRKTWFSIPEKNRPLKDRINLVLSRELKEPPQGAHFLARSLDDALKLTERPELANKVDMIWIVGGSSVYKEAMNHLGHLKLFVTRIMQDFESDTFFSEIDLEKYKLLPEYPGVLSDVQEGKHIKYKFEVCEKDD</sequence>
<gene>
    <name evidence="8" type="primary">DHFR2</name>
    <name type="synonym">DHFRL1</name>
    <name type="synonym">DHFRP4</name>
</gene>
<name>DYR2_HUMAN</name>
<accession>Q86XF0</accession>
<accession>D3DN30</accession>
<accession>Q6P4I9</accession>
<protein>
    <recommendedName>
        <fullName>Dihydrofolate reductase 2, mitochondrial</fullName>
    </recommendedName>
    <alternativeName>
        <fullName>Dihydrofolate reductase, mitochondrial</fullName>
        <ecNumber>1.5.1.3</ecNumber>
    </alternativeName>
    <alternativeName>
        <fullName>Dihydrofolate reductase-like protein 1</fullName>
    </alternativeName>
</protein>
<proteinExistence type="evidence at protein level"/>
<dbReference type="EC" id="1.5.1.3"/>
<dbReference type="EMBL" id="AL832912">
    <property type="protein sequence ID" value="CAH10617.1"/>
    <property type="molecule type" value="mRNA"/>
</dbReference>
<dbReference type="EMBL" id="AC130896">
    <property type="status" value="NOT_ANNOTATED_CDS"/>
    <property type="molecule type" value="Genomic_DNA"/>
</dbReference>
<dbReference type="EMBL" id="CH471052">
    <property type="protein sequence ID" value="EAW79895.1"/>
    <property type="molecule type" value="Genomic_DNA"/>
</dbReference>
<dbReference type="EMBL" id="CH471052">
    <property type="protein sequence ID" value="EAW79896.1"/>
    <property type="molecule type" value="Genomic_DNA"/>
</dbReference>
<dbReference type="EMBL" id="BC045541">
    <property type="protein sequence ID" value="AAH45541.1"/>
    <property type="molecule type" value="mRNA"/>
</dbReference>
<dbReference type="EMBL" id="BC063379">
    <property type="protein sequence ID" value="AAH63379.1"/>
    <property type="molecule type" value="mRNA"/>
</dbReference>
<dbReference type="CCDS" id="CCDS2926.1"/>
<dbReference type="RefSeq" id="NP_001182572.1">
    <property type="nucleotide sequence ID" value="NM_001195643.2"/>
</dbReference>
<dbReference type="RefSeq" id="NP_789785.1">
    <property type="nucleotide sequence ID" value="NM_176815.5"/>
</dbReference>
<dbReference type="RefSeq" id="XP_011510839.1">
    <property type="nucleotide sequence ID" value="XM_011512537.4"/>
</dbReference>
<dbReference type="SMR" id="Q86XF0"/>
<dbReference type="BioGRID" id="128354">
    <property type="interactions" value="292"/>
</dbReference>
<dbReference type="FunCoup" id="Q86XF0">
    <property type="interactions" value="1372"/>
</dbReference>
<dbReference type="IntAct" id="Q86XF0">
    <property type="interactions" value="80"/>
</dbReference>
<dbReference type="STRING" id="9606.ENSP00000319170"/>
<dbReference type="DrugBank" id="DB02402">
    <property type="generic name" value="5-(4-Methoxyphenoxy)-2,4-Quinazolinediamine"/>
</dbReference>
<dbReference type="DrugBank" id="DB02001">
    <property type="generic name" value="5-(4-Morpholin-4-Yl-Phenylsulfanyl)-2,4-Quinazolinediamine"/>
</dbReference>
<dbReference type="DrugBank" id="DB04306">
    <property type="generic name" value="5-[(4-Methylphenyl)Sulfanyl]-2,4-Quinazolinediamine"/>
</dbReference>
<dbReference type="DrugBank" id="DB01958">
    <property type="generic name" value="5-[4-Tert-Butylphenylsulfanyl]-2,4-Quinazolinediamine"/>
</dbReference>
<dbReference type="DrugBank" id="DB01929">
    <property type="generic name" value="5-Chloryl-2,4,6-quinazolinetriamine"/>
</dbReference>
<dbReference type="DrugBank" id="DB04163">
    <property type="generic name" value="5-Phenylsulfanyl-2,4-Quinazolinediamine"/>
</dbReference>
<dbReference type="DrugBank" id="DB07862">
    <property type="generic name" value="7-(1-ETHYL-PROPYL)-7H-PYRROLO-[3,2-F]QUINAZOLINE-1,3-DIAMINE"/>
</dbReference>
<dbReference type="DrugBank" id="DB08203">
    <property type="generic name" value="7-[2-METHOXY-1-(METHOXYMETHYL)ETHYL]-7H-PYRROLO[3,2-F] QUINAZOLINE-1,3-DIAMINE"/>
</dbReference>
<dbReference type="DrugBank" id="DB12116">
    <property type="generic name" value="Epigallocatechin gallate"/>
</dbReference>
<dbReference type="iPTMnet" id="Q86XF0"/>
<dbReference type="PhosphoSitePlus" id="Q86XF0"/>
<dbReference type="BioMuta" id="DHFR2"/>
<dbReference type="DMDM" id="74727819"/>
<dbReference type="jPOST" id="Q86XF0"/>
<dbReference type="MassIVE" id="Q86XF0"/>
<dbReference type="PaxDb" id="9606-ENSP00000377768"/>
<dbReference type="PeptideAtlas" id="Q86XF0"/>
<dbReference type="ProteomicsDB" id="70273"/>
<dbReference type="TopDownProteomics" id="Q86XF0"/>
<dbReference type="Antibodypedia" id="32082">
    <property type="antibodies" value="118 antibodies from 19 providers"/>
</dbReference>
<dbReference type="DNASU" id="200895"/>
<dbReference type="Ensembl" id="ENST00000314636.3">
    <property type="protein sequence ID" value="ENSP00000319170.2"/>
    <property type="gene ID" value="ENSG00000178700.9"/>
</dbReference>
<dbReference type="Ensembl" id="ENST00000394221.3">
    <property type="protein sequence ID" value="ENSP00000377768.2"/>
    <property type="gene ID" value="ENSG00000178700.9"/>
</dbReference>
<dbReference type="Ensembl" id="ENST00000461173.5">
    <property type="protein sequence ID" value="ENSP00000418415.1"/>
    <property type="gene ID" value="ENSG00000178700.9"/>
</dbReference>
<dbReference type="Ensembl" id="ENST00000619045.1">
    <property type="protein sequence ID" value="ENSP00000480823.1"/>
    <property type="gene ID" value="ENSG00000178700.9"/>
</dbReference>
<dbReference type="GeneID" id="200895"/>
<dbReference type="KEGG" id="hsa:200895"/>
<dbReference type="MANE-Select" id="ENST00000314636.3">
    <property type="protein sequence ID" value="ENSP00000319170.2"/>
    <property type="RefSeq nucleotide sequence ID" value="NM_176815.5"/>
    <property type="RefSeq protein sequence ID" value="NP_789785.1"/>
</dbReference>
<dbReference type="UCSC" id="uc003dri.3">
    <property type="organism name" value="human"/>
</dbReference>
<dbReference type="AGR" id="HGNC:27309"/>
<dbReference type="CTD" id="200895"/>
<dbReference type="GeneCards" id="DHFR2"/>
<dbReference type="HGNC" id="HGNC:27309">
    <property type="gene designation" value="DHFR2"/>
</dbReference>
<dbReference type="HPA" id="ENSG00000178700">
    <property type="expression patterns" value="Low tissue specificity"/>
</dbReference>
<dbReference type="MalaCards" id="DHFR2"/>
<dbReference type="MIM" id="616588">
    <property type="type" value="gene"/>
</dbReference>
<dbReference type="neXtProt" id="NX_Q86XF0"/>
<dbReference type="OpenTargets" id="ENSG00000178700"/>
<dbReference type="PharmGKB" id="PA134889916"/>
<dbReference type="VEuPathDB" id="HostDB:ENSG00000178700"/>
<dbReference type="eggNOG" id="KOG1324">
    <property type="taxonomic scope" value="Eukaryota"/>
</dbReference>
<dbReference type="GeneTree" id="ENSGT00390000010283"/>
<dbReference type="InParanoid" id="Q86XF0"/>
<dbReference type="OMA" id="KVEMICI"/>
<dbReference type="OrthoDB" id="4664297at2759"/>
<dbReference type="PAN-GO" id="Q86XF0">
    <property type="GO annotations" value="6 GO annotations based on evolutionary models"/>
</dbReference>
<dbReference type="PhylomeDB" id="Q86XF0"/>
<dbReference type="TreeFam" id="TF317636"/>
<dbReference type="BioCyc" id="MetaCyc:ENSG00000178700-MONOMER"/>
<dbReference type="BRENDA" id="1.5.1.3">
    <property type="organism ID" value="2681"/>
</dbReference>
<dbReference type="PathwayCommons" id="Q86XF0"/>
<dbReference type="Reactome" id="R-HSA-196757">
    <property type="pathway name" value="Metabolism of folate and pterines"/>
</dbReference>
<dbReference type="SignaLink" id="Q86XF0"/>
<dbReference type="SIGNOR" id="Q86XF0"/>
<dbReference type="UniPathway" id="UPA00077">
    <property type="reaction ID" value="UER00158"/>
</dbReference>
<dbReference type="BioGRID-ORCS" id="200895">
    <property type="hits" value="381 hits in 1077 CRISPR screens"/>
</dbReference>
<dbReference type="ChiTaRS" id="DHFR2">
    <property type="organism name" value="human"/>
</dbReference>
<dbReference type="GenomeRNAi" id="200895"/>
<dbReference type="Pharos" id="Q86XF0">
    <property type="development level" value="Tbio"/>
</dbReference>
<dbReference type="PRO" id="PR:Q86XF0"/>
<dbReference type="Proteomes" id="UP000005640">
    <property type="component" value="Chromosome 3"/>
</dbReference>
<dbReference type="RNAct" id="Q86XF0">
    <property type="molecule type" value="protein"/>
</dbReference>
<dbReference type="Bgee" id="ENSG00000178700">
    <property type="expression patterns" value="Expressed in buccal mucosa cell and 196 other cell types or tissues"/>
</dbReference>
<dbReference type="ExpressionAtlas" id="Q86XF0">
    <property type="expression patterns" value="baseline and differential"/>
</dbReference>
<dbReference type="GO" id="GO:0005829">
    <property type="term" value="C:cytosol"/>
    <property type="evidence" value="ECO:0000304"/>
    <property type="project" value="Reactome"/>
</dbReference>
<dbReference type="GO" id="GO:0005743">
    <property type="term" value="C:mitochondrial inner membrane"/>
    <property type="evidence" value="ECO:0000315"/>
    <property type="project" value="UniProtKB"/>
</dbReference>
<dbReference type="GO" id="GO:0005759">
    <property type="term" value="C:mitochondrial matrix"/>
    <property type="evidence" value="ECO:0000315"/>
    <property type="project" value="UniProtKB"/>
</dbReference>
<dbReference type="GO" id="GO:0005739">
    <property type="term" value="C:mitochondrion"/>
    <property type="evidence" value="ECO:0000314"/>
    <property type="project" value="UniProtKB"/>
</dbReference>
<dbReference type="GO" id="GO:0004146">
    <property type="term" value="F:dihydrofolate reductase activity"/>
    <property type="evidence" value="ECO:0000315"/>
    <property type="project" value="UniProtKB"/>
</dbReference>
<dbReference type="GO" id="GO:0033560">
    <property type="term" value="F:folate reductase activity"/>
    <property type="evidence" value="ECO:0000304"/>
    <property type="project" value="Reactome"/>
</dbReference>
<dbReference type="GO" id="GO:0003729">
    <property type="term" value="F:mRNA binding"/>
    <property type="evidence" value="ECO:0000314"/>
    <property type="project" value="UniProtKB"/>
</dbReference>
<dbReference type="GO" id="GO:0050661">
    <property type="term" value="F:NADP binding"/>
    <property type="evidence" value="ECO:0000318"/>
    <property type="project" value="GO_Central"/>
</dbReference>
<dbReference type="GO" id="GO:0046452">
    <property type="term" value="P:dihydrofolate metabolic process"/>
    <property type="evidence" value="ECO:0000318"/>
    <property type="project" value="GO_Central"/>
</dbReference>
<dbReference type="GO" id="GO:0046655">
    <property type="term" value="P:folic acid metabolic process"/>
    <property type="evidence" value="ECO:0000318"/>
    <property type="project" value="GO_Central"/>
</dbReference>
<dbReference type="GO" id="GO:0006730">
    <property type="term" value="P:one-carbon metabolic process"/>
    <property type="evidence" value="ECO:0007669"/>
    <property type="project" value="UniProtKB-KW"/>
</dbReference>
<dbReference type="GO" id="GO:0046654">
    <property type="term" value="P:tetrahydrofolate biosynthetic process"/>
    <property type="evidence" value="ECO:0000318"/>
    <property type="project" value="GO_Central"/>
</dbReference>
<dbReference type="GO" id="GO:0046653">
    <property type="term" value="P:tetrahydrofolate metabolic process"/>
    <property type="evidence" value="ECO:0000314"/>
    <property type="project" value="UniProtKB"/>
</dbReference>
<dbReference type="GO" id="GO:0046105">
    <property type="term" value="P:thymidine biosynthetic process"/>
    <property type="evidence" value="ECO:0000314"/>
    <property type="project" value="UniProtKB"/>
</dbReference>
<dbReference type="CDD" id="cd00209">
    <property type="entry name" value="DHFR"/>
    <property type="match status" value="1"/>
</dbReference>
<dbReference type="FunFam" id="3.40.430.10:FF:000002">
    <property type="entry name" value="Dihydrofolate reductase"/>
    <property type="match status" value="1"/>
</dbReference>
<dbReference type="Gene3D" id="3.40.430.10">
    <property type="entry name" value="Dihydrofolate Reductase, subunit A"/>
    <property type="match status" value="1"/>
</dbReference>
<dbReference type="InterPro" id="IPR012259">
    <property type="entry name" value="DHFR"/>
</dbReference>
<dbReference type="InterPro" id="IPR024072">
    <property type="entry name" value="DHFR-like_dom_sf"/>
</dbReference>
<dbReference type="InterPro" id="IPR001796">
    <property type="entry name" value="DHFR_dom"/>
</dbReference>
<dbReference type="PANTHER" id="PTHR48069">
    <property type="entry name" value="DIHYDROFOLATE REDUCTASE"/>
    <property type="match status" value="1"/>
</dbReference>
<dbReference type="PANTHER" id="PTHR48069:SF1">
    <property type="entry name" value="DIHYDROFOLATE REDUCTASE 2, MITOCHONDRIAL"/>
    <property type="match status" value="1"/>
</dbReference>
<dbReference type="Pfam" id="PF00186">
    <property type="entry name" value="DHFR_1"/>
    <property type="match status" value="1"/>
</dbReference>
<dbReference type="PRINTS" id="PR00070">
    <property type="entry name" value="DHFR"/>
</dbReference>
<dbReference type="SUPFAM" id="SSF53597">
    <property type="entry name" value="Dihydrofolate reductase-like"/>
    <property type="match status" value="1"/>
</dbReference>
<dbReference type="PROSITE" id="PS51330">
    <property type="entry name" value="DHFR_2"/>
    <property type="match status" value="1"/>
</dbReference>
<evidence type="ECO:0000250" key="1"/>
<evidence type="ECO:0000255" key="2">
    <source>
        <dbReference type="PROSITE-ProRule" id="PRU00660"/>
    </source>
</evidence>
<evidence type="ECO:0000269" key="3">
    <source>
    </source>
</evidence>
<evidence type="ECO:0000269" key="4">
    <source>
    </source>
</evidence>
<evidence type="ECO:0000269" key="5">
    <source>
    </source>
</evidence>
<evidence type="ECO:0000269" key="6">
    <source>
    </source>
</evidence>
<evidence type="ECO:0000305" key="7"/>
<evidence type="ECO:0000312" key="8">
    <source>
        <dbReference type="HGNC" id="HGNC:27309"/>
    </source>
</evidence>
<feature type="chain" id="PRO_0000186368" description="Dihydrofolate reductase 2, mitochondrial">
    <location>
        <begin position="1"/>
        <end position="187"/>
    </location>
</feature>
<feature type="domain" description="DHFR" evidence="2">
    <location>
        <begin position="4"/>
        <end position="185"/>
    </location>
</feature>
<feature type="binding site" evidence="1">
    <location>
        <position position="10"/>
    </location>
    <ligand>
        <name>NADP(+)</name>
        <dbReference type="ChEBI" id="CHEBI:58349"/>
    </ligand>
</feature>
<feature type="binding site" evidence="1">
    <location>
        <begin position="16"/>
        <end position="22"/>
    </location>
    <ligand>
        <name>NADP(+)</name>
        <dbReference type="ChEBI" id="CHEBI:58349"/>
    </ligand>
</feature>
<feature type="binding site" evidence="1">
    <location>
        <begin position="31"/>
        <end position="36"/>
    </location>
    <ligand>
        <name>substrate</name>
    </ligand>
</feature>
<feature type="binding site" evidence="1">
    <location>
        <begin position="55"/>
        <end position="57"/>
    </location>
    <ligand>
        <name>NADP(+)</name>
        <dbReference type="ChEBI" id="CHEBI:58349"/>
    </ligand>
</feature>
<feature type="binding site" evidence="1">
    <location>
        <position position="71"/>
    </location>
    <ligand>
        <name>substrate</name>
    </ligand>
</feature>
<feature type="binding site" evidence="1">
    <location>
        <begin position="77"/>
        <end position="79"/>
    </location>
    <ligand>
        <name>NADP(+)</name>
        <dbReference type="ChEBI" id="CHEBI:58349"/>
    </ligand>
</feature>
<feature type="binding site" evidence="1">
    <location>
        <begin position="117"/>
        <end position="124"/>
    </location>
    <ligand>
        <name>NADP(+)</name>
        <dbReference type="ChEBI" id="CHEBI:58349"/>
    </ligand>
</feature>
<feature type="sequence variant" id="VAR_061135" description="In dbSNP:rs17855824." evidence="3">
    <original>V</original>
    <variation>I</variation>
    <location>
        <position position="166"/>
    </location>
</feature>
<reference key="1">
    <citation type="journal article" date="2006" name="Nature">
        <title>The DNA sequence, annotation and analysis of human chromosome 3.</title>
        <authorList>
            <person name="Muzny D.M."/>
            <person name="Scherer S.E."/>
            <person name="Kaul R."/>
            <person name="Wang J."/>
            <person name="Yu J."/>
            <person name="Sudbrak R."/>
            <person name="Buhay C.J."/>
            <person name="Chen R."/>
            <person name="Cree A."/>
            <person name="Ding Y."/>
            <person name="Dugan-Rocha S."/>
            <person name="Gill R."/>
            <person name="Gunaratne P."/>
            <person name="Harris R.A."/>
            <person name="Hawes A.C."/>
            <person name="Hernandez J."/>
            <person name="Hodgson A.V."/>
            <person name="Hume J."/>
            <person name="Jackson A."/>
            <person name="Khan Z.M."/>
            <person name="Kovar-Smith C."/>
            <person name="Lewis L.R."/>
            <person name="Lozado R.J."/>
            <person name="Metzker M.L."/>
            <person name="Milosavljevic A."/>
            <person name="Miner G.R."/>
            <person name="Morgan M.B."/>
            <person name="Nazareth L.V."/>
            <person name="Scott G."/>
            <person name="Sodergren E."/>
            <person name="Song X.-Z."/>
            <person name="Steffen D."/>
            <person name="Wei S."/>
            <person name="Wheeler D.A."/>
            <person name="Wright M.W."/>
            <person name="Worley K.C."/>
            <person name="Yuan Y."/>
            <person name="Zhang Z."/>
            <person name="Adams C.Q."/>
            <person name="Ansari-Lari M.A."/>
            <person name="Ayele M."/>
            <person name="Brown M.J."/>
            <person name="Chen G."/>
            <person name="Chen Z."/>
            <person name="Clendenning J."/>
            <person name="Clerc-Blankenburg K.P."/>
            <person name="Chen R."/>
            <person name="Chen Z."/>
            <person name="Davis C."/>
            <person name="Delgado O."/>
            <person name="Dinh H.H."/>
            <person name="Dong W."/>
            <person name="Draper H."/>
            <person name="Ernst S."/>
            <person name="Fu G."/>
            <person name="Gonzalez-Garay M.L."/>
            <person name="Garcia D.K."/>
            <person name="Gillett W."/>
            <person name="Gu J."/>
            <person name="Hao B."/>
            <person name="Haugen E."/>
            <person name="Havlak P."/>
            <person name="He X."/>
            <person name="Hennig S."/>
            <person name="Hu S."/>
            <person name="Huang W."/>
            <person name="Jackson L.R."/>
            <person name="Jacob L.S."/>
            <person name="Kelly S.H."/>
            <person name="Kube M."/>
            <person name="Levy R."/>
            <person name="Li Z."/>
            <person name="Liu B."/>
            <person name="Liu J."/>
            <person name="Liu W."/>
            <person name="Lu J."/>
            <person name="Maheshwari M."/>
            <person name="Nguyen B.-V."/>
            <person name="Okwuonu G.O."/>
            <person name="Palmeiri A."/>
            <person name="Pasternak S."/>
            <person name="Perez L.M."/>
            <person name="Phelps K.A."/>
            <person name="Plopper F.J."/>
            <person name="Qiang B."/>
            <person name="Raymond C."/>
            <person name="Rodriguez R."/>
            <person name="Saenphimmachak C."/>
            <person name="Santibanez J."/>
            <person name="Shen H."/>
            <person name="Shen Y."/>
            <person name="Subramanian S."/>
            <person name="Tabor P.E."/>
            <person name="Verduzco D."/>
            <person name="Waldron L."/>
            <person name="Wang J."/>
            <person name="Wang J."/>
            <person name="Wang Q."/>
            <person name="Williams G.A."/>
            <person name="Wong G.K.-S."/>
            <person name="Yao Z."/>
            <person name="Zhang J."/>
            <person name="Zhang X."/>
            <person name="Zhao G."/>
            <person name="Zhou J."/>
            <person name="Zhou Y."/>
            <person name="Nelson D."/>
            <person name="Lehrach H."/>
            <person name="Reinhardt R."/>
            <person name="Naylor S.L."/>
            <person name="Yang H."/>
            <person name="Olson M."/>
            <person name="Weinstock G."/>
            <person name="Gibbs R.A."/>
        </authorList>
    </citation>
    <scope>NUCLEOTIDE SEQUENCE [LARGE SCALE GENOMIC DNA]</scope>
</reference>
<reference key="2">
    <citation type="journal article" date="2007" name="BMC Genomics">
        <title>The full-ORF clone resource of the German cDNA consortium.</title>
        <authorList>
            <person name="Bechtel S."/>
            <person name="Rosenfelder H."/>
            <person name="Duda A."/>
            <person name="Schmidt C.P."/>
            <person name="Ernst U."/>
            <person name="Wellenreuther R."/>
            <person name="Mehrle A."/>
            <person name="Schuster C."/>
            <person name="Bahr A."/>
            <person name="Bloecker H."/>
            <person name="Heubner D."/>
            <person name="Hoerlein A."/>
            <person name="Michel G."/>
            <person name="Wedler H."/>
            <person name="Koehrer K."/>
            <person name="Ottenwaelder B."/>
            <person name="Poustka A."/>
            <person name="Wiemann S."/>
            <person name="Schupp I."/>
        </authorList>
    </citation>
    <scope>NUCLEOTIDE SEQUENCE [LARGE SCALE MRNA]</scope>
    <source>
        <tissue>Melanoma</tissue>
    </source>
</reference>
<reference key="3">
    <citation type="submission" date="2005-09" db="EMBL/GenBank/DDBJ databases">
        <authorList>
            <person name="Mural R.J."/>
            <person name="Istrail S."/>
            <person name="Sutton G.G."/>
            <person name="Florea L."/>
            <person name="Halpern A.L."/>
            <person name="Mobarry C.M."/>
            <person name="Lippert R."/>
            <person name="Walenz B."/>
            <person name="Shatkay H."/>
            <person name="Dew I."/>
            <person name="Miller J.R."/>
            <person name="Flanigan M.J."/>
            <person name="Edwards N.J."/>
            <person name="Bolanos R."/>
            <person name="Fasulo D."/>
            <person name="Halldorsson B.V."/>
            <person name="Hannenhalli S."/>
            <person name="Turner R."/>
            <person name="Yooseph S."/>
            <person name="Lu F."/>
            <person name="Nusskern D.R."/>
            <person name="Shue B.C."/>
            <person name="Zheng X.H."/>
            <person name="Zhong F."/>
            <person name="Delcher A.L."/>
            <person name="Huson D.H."/>
            <person name="Kravitz S.A."/>
            <person name="Mouchard L."/>
            <person name="Reinert K."/>
            <person name="Remington K.A."/>
            <person name="Clark A.G."/>
            <person name="Waterman M.S."/>
            <person name="Eichler E.E."/>
            <person name="Adams M.D."/>
            <person name="Hunkapiller M.W."/>
            <person name="Myers E.W."/>
            <person name="Venter J.C."/>
        </authorList>
    </citation>
    <scope>NUCLEOTIDE SEQUENCE [LARGE SCALE GENOMIC DNA]</scope>
</reference>
<reference key="4">
    <citation type="journal article" date="2004" name="Genome Res.">
        <title>The status, quality, and expansion of the NIH full-length cDNA project: the Mammalian Gene Collection (MGC).</title>
        <authorList>
            <consortium name="The MGC Project Team"/>
        </authorList>
    </citation>
    <scope>NUCLEOTIDE SEQUENCE [LARGE SCALE MRNA]</scope>
    <scope>VARIANT ILE-166</scope>
    <source>
        <tissue>Brain</tissue>
        <tissue>Muscle</tissue>
    </source>
</reference>
<reference key="5">
    <citation type="journal article" date="2011" name="Proc. Natl. Acad. Sci. U.S.A.">
        <title>Identification of a de novo thymidylate biosynthesis pathway in mammalian mitochondria.</title>
        <authorList>
            <person name="Anderson D.D."/>
            <person name="Quintero C.M."/>
            <person name="Stover P.J."/>
        </authorList>
    </citation>
    <scope>FUNCTION</scope>
    <scope>SUBCELLULAR LOCATION</scope>
</reference>
<reference key="6">
    <citation type="journal article" date="2011" name="Proc. Natl. Acad. Sci. U.S.A.">
        <title>The former annotated human pseudogene dihydrofolate reductase-like 1 (DHFRL1) is expressed and functional.</title>
        <authorList>
            <person name="McEntee G."/>
            <person name="Minguzzi S."/>
            <person name="O'Brien K."/>
            <person name="Ben Larbi N."/>
            <person name="Loscher C."/>
            <person name="O'Fagain C."/>
            <person name="Parle-McDermott A."/>
        </authorList>
    </citation>
    <scope>FUNCTION</scope>
    <scope>RNA-BINDING</scope>
    <scope>CATALYTIC ACTIVITY</scope>
    <scope>BIOPHYSICOCHEMICAL PROPERTIES</scope>
    <scope>SUBCELLULAR LOCATION</scope>
    <scope>TISSUE SPECIFICITY</scope>
</reference>
<reference key="7">
    <citation type="journal article" date="2015" name="FEBS Lett.">
        <title>An active second dihydrofolate reductase enzyme is not a feature of rat and mouse, but they do have activity in their mitochondria.</title>
        <authorList>
            <person name="Hughes L."/>
            <person name="Carton R."/>
            <person name="Minguzzi S."/>
            <person name="McEntee G."/>
            <person name="Deinum E.E."/>
            <person name="O'Connell M.J."/>
            <person name="Parle-McDermott A."/>
        </authorList>
    </citation>
    <scope>PHYLOGENY</scope>
</reference>
<comment type="function">
    <text evidence="4 5">Key enzyme in folate metabolism. Contributes to the de novo mitochondrial thymidylate biosynthesis pathway. Required to prevent uracil accumulation in mtDNA. Binds its own mRNA and that of DHFR.</text>
</comment>
<comment type="catalytic activity">
    <reaction evidence="2 4">
        <text>(6S)-5,6,7,8-tetrahydrofolate + NADP(+) = 7,8-dihydrofolate + NADPH + H(+)</text>
        <dbReference type="Rhea" id="RHEA:15009"/>
        <dbReference type="ChEBI" id="CHEBI:15378"/>
        <dbReference type="ChEBI" id="CHEBI:57451"/>
        <dbReference type="ChEBI" id="CHEBI:57453"/>
        <dbReference type="ChEBI" id="CHEBI:57783"/>
        <dbReference type="ChEBI" id="CHEBI:58349"/>
        <dbReference type="EC" id="1.5.1.3"/>
    </reaction>
</comment>
<comment type="biophysicochemical properties">
    <kinetics>
        <KM evidence="4">209 uM for dihydrofolate</KM>
        <KM evidence="4">20 uM for NADPH</KM>
    </kinetics>
</comment>
<comment type="pathway">
    <text>Cofactor biosynthesis; tetrahydrofolate biosynthesis; 5,6,7,8-tetrahydrofolate from 7,8-dihydrofolate: step 1/1.</text>
</comment>
<comment type="subcellular location">
    <subcellularLocation>
        <location evidence="4 5">Mitochondrion</location>
    </subcellularLocation>
    <subcellularLocation>
        <location evidence="5">Mitochondrion matrix</location>
    </subcellularLocation>
    <subcellularLocation>
        <location evidence="5">Mitochondrion inner membrane</location>
    </subcellularLocation>
</comment>
<comment type="tissue specificity">
    <text evidence="4">Expressed in numerous cell lines.</text>
</comment>
<comment type="miscellaneous">
    <text evidence="6">Humans have acquired two dihydrofolate reductase enzymes during their evolution, DHFR and DHFR2. In contrast to human, mice and brown rats have just one.</text>
</comment>
<comment type="similarity">
    <text evidence="7">Belongs to the dihydrofolate reductase family.</text>
</comment>